<gene>
    <name evidence="1" type="primary">accA</name>
    <name type="ordered locus">ESA_03156</name>
</gene>
<dbReference type="EC" id="2.1.3.15" evidence="1"/>
<dbReference type="EMBL" id="CP000783">
    <property type="protein sequence ID" value="ABU78379.1"/>
    <property type="molecule type" value="Genomic_DNA"/>
</dbReference>
<dbReference type="RefSeq" id="WP_004386121.1">
    <property type="nucleotide sequence ID" value="NC_009778.1"/>
</dbReference>
<dbReference type="SMR" id="A7MEM7"/>
<dbReference type="GeneID" id="56731848"/>
<dbReference type="KEGG" id="esa:ESA_03156"/>
<dbReference type="HOGENOM" id="CLU_015486_0_2_6"/>
<dbReference type="UniPathway" id="UPA00655">
    <property type="reaction ID" value="UER00711"/>
</dbReference>
<dbReference type="Proteomes" id="UP000000260">
    <property type="component" value="Chromosome"/>
</dbReference>
<dbReference type="GO" id="GO:0009317">
    <property type="term" value="C:acetyl-CoA carboxylase complex"/>
    <property type="evidence" value="ECO:0007669"/>
    <property type="project" value="InterPro"/>
</dbReference>
<dbReference type="GO" id="GO:0003989">
    <property type="term" value="F:acetyl-CoA carboxylase activity"/>
    <property type="evidence" value="ECO:0007669"/>
    <property type="project" value="InterPro"/>
</dbReference>
<dbReference type="GO" id="GO:0005524">
    <property type="term" value="F:ATP binding"/>
    <property type="evidence" value="ECO:0007669"/>
    <property type="project" value="UniProtKB-KW"/>
</dbReference>
<dbReference type="GO" id="GO:0016743">
    <property type="term" value="F:carboxyl- or carbamoyltransferase activity"/>
    <property type="evidence" value="ECO:0007669"/>
    <property type="project" value="UniProtKB-UniRule"/>
</dbReference>
<dbReference type="GO" id="GO:0006633">
    <property type="term" value="P:fatty acid biosynthetic process"/>
    <property type="evidence" value="ECO:0007669"/>
    <property type="project" value="UniProtKB-KW"/>
</dbReference>
<dbReference type="GO" id="GO:2001295">
    <property type="term" value="P:malonyl-CoA biosynthetic process"/>
    <property type="evidence" value="ECO:0007669"/>
    <property type="project" value="UniProtKB-UniRule"/>
</dbReference>
<dbReference type="FunFam" id="3.90.226.10:FF:000008">
    <property type="entry name" value="Acetyl-coenzyme A carboxylase carboxyl transferase subunit alpha"/>
    <property type="match status" value="1"/>
</dbReference>
<dbReference type="Gene3D" id="3.90.226.10">
    <property type="entry name" value="2-enoyl-CoA Hydratase, Chain A, domain 1"/>
    <property type="match status" value="1"/>
</dbReference>
<dbReference type="HAMAP" id="MF_00823">
    <property type="entry name" value="AcetylCoA_CT_alpha"/>
    <property type="match status" value="1"/>
</dbReference>
<dbReference type="InterPro" id="IPR001095">
    <property type="entry name" value="Acetyl_CoA_COase_a_su"/>
</dbReference>
<dbReference type="InterPro" id="IPR029045">
    <property type="entry name" value="ClpP/crotonase-like_dom_sf"/>
</dbReference>
<dbReference type="InterPro" id="IPR011763">
    <property type="entry name" value="COA_CT_C"/>
</dbReference>
<dbReference type="NCBIfam" id="TIGR00513">
    <property type="entry name" value="accA"/>
    <property type="match status" value="1"/>
</dbReference>
<dbReference type="NCBIfam" id="NF041504">
    <property type="entry name" value="AccA_sub"/>
    <property type="match status" value="1"/>
</dbReference>
<dbReference type="NCBIfam" id="NF004344">
    <property type="entry name" value="PRK05724.1"/>
    <property type="match status" value="1"/>
</dbReference>
<dbReference type="PANTHER" id="PTHR42853">
    <property type="entry name" value="ACETYL-COENZYME A CARBOXYLASE CARBOXYL TRANSFERASE SUBUNIT ALPHA"/>
    <property type="match status" value="1"/>
</dbReference>
<dbReference type="PANTHER" id="PTHR42853:SF3">
    <property type="entry name" value="ACETYL-COENZYME A CARBOXYLASE CARBOXYL TRANSFERASE SUBUNIT ALPHA, CHLOROPLASTIC"/>
    <property type="match status" value="1"/>
</dbReference>
<dbReference type="Pfam" id="PF03255">
    <property type="entry name" value="ACCA"/>
    <property type="match status" value="1"/>
</dbReference>
<dbReference type="PRINTS" id="PR01069">
    <property type="entry name" value="ACCCTRFRASEA"/>
</dbReference>
<dbReference type="SUPFAM" id="SSF52096">
    <property type="entry name" value="ClpP/crotonase"/>
    <property type="match status" value="1"/>
</dbReference>
<dbReference type="PROSITE" id="PS50989">
    <property type="entry name" value="COA_CT_CTER"/>
    <property type="match status" value="1"/>
</dbReference>
<evidence type="ECO:0000255" key="1">
    <source>
        <dbReference type="HAMAP-Rule" id="MF_00823"/>
    </source>
</evidence>
<evidence type="ECO:0000255" key="2">
    <source>
        <dbReference type="PROSITE-ProRule" id="PRU01137"/>
    </source>
</evidence>
<comment type="function">
    <text evidence="1">Component of the acetyl coenzyme A carboxylase (ACC) complex. First, biotin carboxylase catalyzes the carboxylation of biotin on its carrier protein (BCCP) and then the CO(2) group is transferred by the carboxyltransferase to acetyl-CoA to form malonyl-CoA.</text>
</comment>
<comment type="catalytic activity">
    <reaction evidence="1">
        <text>N(6)-carboxybiotinyl-L-lysyl-[protein] + acetyl-CoA = N(6)-biotinyl-L-lysyl-[protein] + malonyl-CoA</text>
        <dbReference type="Rhea" id="RHEA:54728"/>
        <dbReference type="Rhea" id="RHEA-COMP:10505"/>
        <dbReference type="Rhea" id="RHEA-COMP:10506"/>
        <dbReference type="ChEBI" id="CHEBI:57288"/>
        <dbReference type="ChEBI" id="CHEBI:57384"/>
        <dbReference type="ChEBI" id="CHEBI:83144"/>
        <dbReference type="ChEBI" id="CHEBI:83145"/>
        <dbReference type="EC" id="2.1.3.15"/>
    </reaction>
</comment>
<comment type="pathway">
    <text evidence="1">Lipid metabolism; malonyl-CoA biosynthesis; malonyl-CoA from acetyl-CoA: step 1/1.</text>
</comment>
<comment type="subunit">
    <text evidence="1">Acetyl-CoA carboxylase is a heterohexamer composed of biotin carboxyl carrier protein (AccB), biotin carboxylase (AccC) and two subunits each of ACCase subunit alpha (AccA) and ACCase subunit beta (AccD).</text>
</comment>
<comment type="subcellular location">
    <subcellularLocation>
        <location evidence="1">Cytoplasm</location>
    </subcellularLocation>
</comment>
<comment type="similarity">
    <text evidence="1">Belongs to the AccA family.</text>
</comment>
<feature type="chain" id="PRO_1000062617" description="Acetyl-coenzyme A carboxylase carboxyl transferase subunit alpha">
    <location>
        <begin position="1"/>
        <end position="319"/>
    </location>
</feature>
<feature type="domain" description="CoA carboxyltransferase C-terminal" evidence="2">
    <location>
        <begin position="35"/>
        <end position="296"/>
    </location>
</feature>
<proteinExistence type="inferred from homology"/>
<sequence>MSLNFLDFEQPIAELEAKIDSLTAVSRQDEKLDINIDEEVHRLREKSVELTRKIFADLGAWQIAQLARHPQRPYTLDYVRLAFDEFDELAGDRAYADDKAIVGGIARLDGRPVMIIGHQKGRETKEKIRRNFGMPAPEGYRKALRLMEMAERFNMPIITFIDTPGAYPGVGAEERGQSEAIARNLREMSRLKVPVICTVIGEGGSGGALAIGVGDKVNMLQYSTYSVISPEGCASILWKSADKAPLAAEAMGIIAPRLKELKLIDSVIPEPLGGAHRNPEAMAQSLKTQLLADLADLDVLSKDDLLNRRYQRLMSYGYA</sequence>
<accession>A7MEM7</accession>
<keyword id="KW-0067">ATP-binding</keyword>
<keyword id="KW-0963">Cytoplasm</keyword>
<keyword id="KW-0275">Fatty acid biosynthesis</keyword>
<keyword id="KW-0276">Fatty acid metabolism</keyword>
<keyword id="KW-0444">Lipid biosynthesis</keyword>
<keyword id="KW-0443">Lipid metabolism</keyword>
<keyword id="KW-0547">Nucleotide-binding</keyword>
<keyword id="KW-1185">Reference proteome</keyword>
<keyword id="KW-0808">Transferase</keyword>
<name>ACCA_CROS8</name>
<reference key="1">
    <citation type="journal article" date="2010" name="PLoS ONE">
        <title>Genome sequence of Cronobacter sakazakii BAA-894 and comparative genomic hybridization analysis with other Cronobacter species.</title>
        <authorList>
            <person name="Kucerova E."/>
            <person name="Clifton S.W."/>
            <person name="Xia X.Q."/>
            <person name="Long F."/>
            <person name="Porwollik S."/>
            <person name="Fulton L."/>
            <person name="Fronick C."/>
            <person name="Minx P."/>
            <person name="Kyung K."/>
            <person name="Warren W."/>
            <person name="Fulton R."/>
            <person name="Feng D."/>
            <person name="Wollam A."/>
            <person name="Shah N."/>
            <person name="Bhonagiri V."/>
            <person name="Nash W.E."/>
            <person name="Hallsworth-Pepin K."/>
            <person name="Wilson R.K."/>
            <person name="McClelland M."/>
            <person name="Forsythe S.J."/>
        </authorList>
    </citation>
    <scope>NUCLEOTIDE SEQUENCE [LARGE SCALE GENOMIC DNA]</scope>
    <source>
        <strain>ATCC BAA-894</strain>
    </source>
</reference>
<protein>
    <recommendedName>
        <fullName evidence="1">Acetyl-coenzyme A carboxylase carboxyl transferase subunit alpha</fullName>
        <shortName evidence="1">ACCase subunit alpha</shortName>
        <shortName evidence="1">Acetyl-CoA carboxylase carboxyltransferase subunit alpha</shortName>
        <ecNumber evidence="1">2.1.3.15</ecNumber>
    </recommendedName>
</protein>
<organism>
    <name type="scientific">Cronobacter sakazakii (strain ATCC BAA-894)</name>
    <name type="common">Enterobacter sakazakii</name>
    <dbReference type="NCBI Taxonomy" id="290339"/>
    <lineage>
        <taxon>Bacteria</taxon>
        <taxon>Pseudomonadati</taxon>
        <taxon>Pseudomonadota</taxon>
        <taxon>Gammaproteobacteria</taxon>
        <taxon>Enterobacterales</taxon>
        <taxon>Enterobacteriaceae</taxon>
        <taxon>Cronobacter</taxon>
    </lineage>
</organism>